<proteinExistence type="inferred from homology"/>
<comment type="function">
    <text evidence="1">One of the primary rRNA binding proteins, it binds directly near the 3'-end of the 23S rRNA, where it nucleates assembly of the 50S subunit.</text>
</comment>
<comment type="subunit">
    <text evidence="1">Part of the 50S ribosomal subunit. Forms a cluster with proteins L14 and L19.</text>
</comment>
<comment type="similarity">
    <text evidence="1">Belongs to the universal ribosomal protein uL3 family.</text>
</comment>
<name>RL3_CHLFF</name>
<keyword id="KW-0687">Ribonucleoprotein</keyword>
<keyword id="KW-0689">Ribosomal protein</keyword>
<keyword id="KW-0694">RNA-binding</keyword>
<keyword id="KW-0699">rRNA-binding</keyword>
<dbReference type="EMBL" id="AP006861">
    <property type="protein sequence ID" value="BAE81685.1"/>
    <property type="molecule type" value="Genomic_DNA"/>
</dbReference>
<dbReference type="RefSeq" id="WP_011458458.1">
    <property type="nucleotide sequence ID" value="NC_007899.1"/>
</dbReference>
<dbReference type="SMR" id="Q252V3"/>
<dbReference type="STRING" id="264202.CF0913"/>
<dbReference type="KEGG" id="cfe:CF0913"/>
<dbReference type="eggNOG" id="COG0087">
    <property type="taxonomic scope" value="Bacteria"/>
</dbReference>
<dbReference type="HOGENOM" id="CLU_044142_4_1_0"/>
<dbReference type="OrthoDB" id="9806135at2"/>
<dbReference type="Proteomes" id="UP000001260">
    <property type="component" value="Chromosome"/>
</dbReference>
<dbReference type="GO" id="GO:0022625">
    <property type="term" value="C:cytosolic large ribosomal subunit"/>
    <property type="evidence" value="ECO:0007669"/>
    <property type="project" value="TreeGrafter"/>
</dbReference>
<dbReference type="GO" id="GO:0019843">
    <property type="term" value="F:rRNA binding"/>
    <property type="evidence" value="ECO:0007669"/>
    <property type="project" value="UniProtKB-UniRule"/>
</dbReference>
<dbReference type="GO" id="GO:0003735">
    <property type="term" value="F:structural constituent of ribosome"/>
    <property type="evidence" value="ECO:0007669"/>
    <property type="project" value="InterPro"/>
</dbReference>
<dbReference type="GO" id="GO:0006412">
    <property type="term" value="P:translation"/>
    <property type="evidence" value="ECO:0007669"/>
    <property type="project" value="UniProtKB-UniRule"/>
</dbReference>
<dbReference type="FunFam" id="2.40.30.10:FF:000004">
    <property type="entry name" value="50S ribosomal protein L3"/>
    <property type="match status" value="1"/>
</dbReference>
<dbReference type="Gene3D" id="3.30.160.810">
    <property type="match status" value="1"/>
</dbReference>
<dbReference type="Gene3D" id="2.40.30.10">
    <property type="entry name" value="Translation factors"/>
    <property type="match status" value="1"/>
</dbReference>
<dbReference type="HAMAP" id="MF_01325_B">
    <property type="entry name" value="Ribosomal_uL3_B"/>
    <property type="match status" value="1"/>
</dbReference>
<dbReference type="InterPro" id="IPR000597">
    <property type="entry name" value="Ribosomal_uL3"/>
</dbReference>
<dbReference type="InterPro" id="IPR019927">
    <property type="entry name" value="Ribosomal_uL3_bac/org-type"/>
</dbReference>
<dbReference type="InterPro" id="IPR009000">
    <property type="entry name" value="Transl_B-barrel_sf"/>
</dbReference>
<dbReference type="NCBIfam" id="TIGR03625">
    <property type="entry name" value="L3_bact"/>
    <property type="match status" value="1"/>
</dbReference>
<dbReference type="PANTHER" id="PTHR11229">
    <property type="entry name" value="50S RIBOSOMAL PROTEIN L3"/>
    <property type="match status" value="1"/>
</dbReference>
<dbReference type="PANTHER" id="PTHR11229:SF16">
    <property type="entry name" value="LARGE RIBOSOMAL SUBUNIT PROTEIN UL3C"/>
    <property type="match status" value="1"/>
</dbReference>
<dbReference type="Pfam" id="PF00297">
    <property type="entry name" value="Ribosomal_L3"/>
    <property type="match status" value="1"/>
</dbReference>
<dbReference type="SUPFAM" id="SSF50447">
    <property type="entry name" value="Translation proteins"/>
    <property type="match status" value="1"/>
</dbReference>
<organism>
    <name type="scientific">Chlamydia felis (strain Fe/C-56)</name>
    <name type="common">Chlamydophila felis</name>
    <dbReference type="NCBI Taxonomy" id="264202"/>
    <lineage>
        <taxon>Bacteria</taxon>
        <taxon>Pseudomonadati</taxon>
        <taxon>Chlamydiota</taxon>
        <taxon>Chlamydiia</taxon>
        <taxon>Chlamydiales</taxon>
        <taxon>Chlamydiaceae</taxon>
        <taxon>Chlamydia/Chlamydophila group</taxon>
        <taxon>Chlamydia</taxon>
    </lineage>
</organism>
<gene>
    <name evidence="1" type="primary">rplC</name>
    <name type="ordered locus">CF0913</name>
</gene>
<feature type="chain" id="PRO_0000241333" description="Large ribosomal subunit protein uL3">
    <location>
        <begin position="1"/>
        <end position="221"/>
    </location>
</feature>
<sequence length="221" mass="23779">MRSQLSLMGKKEGMIHVFDKDGNLVACSVISMSPNVVSQIKVDSTDGYNAIQMGADEISVPEKTLQKRVNKPILGHFKKSGSRVFRTLKEVRVSEDAVNEASLGSEFGLEVFEDVSSVDISGVSKGKGFQGVMKKFGFRGGPKTHGSGFHRHAGSIGMRSTPGRCFPGSKRPSHMGAVNVTIKNLEVIKIDLEKKVLLVKGAIPGPRGSVVVVRRSSRAKA</sequence>
<reference key="1">
    <citation type="journal article" date="2006" name="DNA Res.">
        <title>Genome sequence of the cat pathogen, Chlamydophila felis.</title>
        <authorList>
            <person name="Azuma Y."/>
            <person name="Hirakawa H."/>
            <person name="Yamashita A."/>
            <person name="Cai Y."/>
            <person name="Rahman M.A."/>
            <person name="Suzuki H."/>
            <person name="Mitaku S."/>
            <person name="Toh H."/>
            <person name="Goto S."/>
            <person name="Murakami T."/>
            <person name="Sugi K."/>
            <person name="Hayashi H."/>
            <person name="Fukushi H."/>
            <person name="Hattori M."/>
            <person name="Kuhara S."/>
            <person name="Shirai M."/>
        </authorList>
    </citation>
    <scope>NUCLEOTIDE SEQUENCE [LARGE SCALE GENOMIC DNA]</scope>
    <source>
        <strain>Fe/C-56</strain>
    </source>
</reference>
<evidence type="ECO:0000255" key="1">
    <source>
        <dbReference type="HAMAP-Rule" id="MF_01325"/>
    </source>
</evidence>
<evidence type="ECO:0000305" key="2"/>
<protein>
    <recommendedName>
        <fullName evidence="1">Large ribosomal subunit protein uL3</fullName>
    </recommendedName>
    <alternativeName>
        <fullName evidence="2">50S ribosomal protein L3</fullName>
    </alternativeName>
</protein>
<accession>Q252V3</accession>